<organism>
    <name type="scientific">Methanococcus maripaludis (strain C5 / ATCC BAA-1333)</name>
    <dbReference type="NCBI Taxonomy" id="402880"/>
    <lineage>
        <taxon>Archaea</taxon>
        <taxon>Methanobacteriati</taxon>
        <taxon>Methanobacteriota</taxon>
        <taxon>Methanomada group</taxon>
        <taxon>Methanococci</taxon>
        <taxon>Methanococcales</taxon>
        <taxon>Methanococcaceae</taxon>
        <taxon>Methanococcus</taxon>
    </lineage>
</organism>
<accession>A4G0Y9</accession>
<gene>
    <name evidence="1" type="primary">speH</name>
    <name type="ordered locus">MmarC5_1826</name>
</gene>
<keyword id="KW-0068">Autocatalytic cleavage</keyword>
<keyword id="KW-0210">Decarboxylase</keyword>
<keyword id="KW-0456">Lyase</keyword>
<keyword id="KW-0620">Polyamine biosynthesis</keyword>
<keyword id="KW-0670">Pyruvate</keyword>
<keyword id="KW-0949">S-adenosyl-L-methionine</keyword>
<keyword id="KW-0704">Schiff base</keyword>
<keyword id="KW-0745">Spermidine biosynthesis</keyword>
<keyword id="KW-0865">Zymogen</keyword>
<feature type="chain" id="PRO_1000013676" description="S-adenosylmethionine decarboxylase beta chain" evidence="1">
    <location>
        <begin position="1"/>
        <end position="62"/>
    </location>
</feature>
<feature type="chain" id="PRO_0000315038" description="S-adenosylmethionine decarboxylase alpha chain" evidence="1">
    <location>
        <begin position="63"/>
        <end position="122"/>
    </location>
</feature>
<feature type="active site" description="Schiff-base intermediate with substrate; via pyruvic acid" evidence="1">
    <location>
        <position position="63"/>
    </location>
</feature>
<feature type="active site" description="Proton acceptor; for processing activity" evidence="1">
    <location>
        <position position="68"/>
    </location>
</feature>
<feature type="active site" description="Proton donor; for catalytic activity" evidence="1">
    <location>
        <position position="83"/>
    </location>
</feature>
<feature type="site" description="Cleavage (non-hydrolytic); by autolysis" evidence="1">
    <location>
        <begin position="62"/>
        <end position="63"/>
    </location>
</feature>
<feature type="modified residue" description="Pyruvic acid (Ser); by autocatalysis" evidence="1">
    <location>
        <position position="63"/>
    </location>
</feature>
<sequence length="122" mass="13633">MKQLGKHIILELWGCENQALDDQPGIEKMLVDAVKACGATLICVKTHKFSPQGVTGVAVLSESHISIHTWPELRYAAMDVFTCGEHVTPHDTIPEIQKFLKPEKIDVMDIKRGIIEVDEVKE</sequence>
<protein>
    <recommendedName>
        <fullName evidence="1">S-adenosylmethionine decarboxylase proenzyme</fullName>
        <shortName evidence="1">AdoMetDC</shortName>
        <shortName evidence="1">SAMDC</shortName>
        <ecNumber evidence="1">4.1.1.50</ecNumber>
    </recommendedName>
    <component>
        <recommendedName>
            <fullName evidence="1">S-adenosylmethionine decarboxylase beta chain</fullName>
        </recommendedName>
    </component>
    <component>
        <recommendedName>
            <fullName evidence="1">S-adenosylmethionine decarboxylase alpha chain</fullName>
        </recommendedName>
    </component>
</protein>
<proteinExistence type="inferred from homology"/>
<comment type="function">
    <text evidence="1">Catalyzes the decarboxylation of S-adenosylmethionine to S-adenosylmethioninamine (dcAdoMet), the propylamine donor required for the synthesis of the polyamines spermine and spermidine from the diamine putrescine.</text>
</comment>
<comment type="catalytic activity">
    <reaction evidence="1">
        <text>S-adenosyl-L-methionine + H(+) = S-adenosyl 3-(methylsulfanyl)propylamine + CO2</text>
        <dbReference type="Rhea" id="RHEA:15981"/>
        <dbReference type="ChEBI" id="CHEBI:15378"/>
        <dbReference type="ChEBI" id="CHEBI:16526"/>
        <dbReference type="ChEBI" id="CHEBI:57443"/>
        <dbReference type="ChEBI" id="CHEBI:59789"/>
        <dbReference type="EC" id="4.1.1.50"/>
    </reaction>
</comment>
<comment type="cofactor">
    <cofactor evidence="1">
        <name>pyruvate</name>
        <dbReference type="ChEBI" id="CHEBI:15361"/>
    </cofactor>
    <text evidence="1">Binds 1 pyruvoyl group covalently per subunit.</text>
</comment>
<comment type="pathway">
    <text evidence="1">Amine and polyamine biosynthesis; S-adenosylmethioninamine biosynthesis; S-adenosylmethioninamine from S-adenosyl-L-methionine: step 1/1.</text>
</comment>
<comment type="subunit">
    <text evidence="1">Heterotetramer of two alpha and two beta chains arranged as a dimer of alpha/beta heterodimers.</text>
</comment>
<comment type="PTM">
    <text evidence="1">Is synthesized initially as an inactive proenzyme. Formation of the active enzyme involves a self-maturation process in which the active site pyruvoyl group is generated from an internal serine residue via an autocatalytic post-translational modification. Two non-identical subunits are generated from the proenzyme in this reaction, and the pyruvate is formed at the N-terminus of the alpha chain, which is derived from the carboxyl end of the proenzyme. The post-translation cleavage follows an unusual pathway, termed non-hydrolytic serinolysis, in which the side chain hydroxyl group of the serine supplies its oxygen atom to form the C-terminus of the beta chain, while the remainder of the serine residue undergoes an oxidative deamination to produce ammonia and the pyruvoyl group blocking the N-terminus of the alpha chain.</text>
</comment>
<comment type="similarity">
    <text evidence="1">Belongs to the prokaryotic AdoMetDC family. Type 1 subfamily.</text>
</comment>
<name>SPEH_METM5</name>
<dbReference type="EC" id="4.1.1.50" evidence="1"/>
<dbReference type="EMBL" id="CP000609">
    <property type="protein sequence ID" value="ABO36123.1"/>
    <property type="molecule type" value="Genomic_DNA"/>
</dbReference>
<dbReference type="RefSeq" id="WP_011869568.1">
    <property type="nucleotide sequence ID" value="NC_009135.1"/>
</dbReference>
<dbReference type="SMR" id="A4G0Y9"/>
<dbReference type="STRING" id="402880.MmarC5_1826"/>
<dbReference type="GeneID" id="4927770"/>
<dbReference type="KEGG" id="mmq:MmarC5_1826"/>
<dbReference type="eggNOG" id="arCOG00279">
    <property type="taxonomic scope" value="Archaea"/>
</dbReference>
<dbReference type="HOGENOM" id="CLU_125470_2_3_2"/>
<dbReference type="OrthoDB" id="114016at2157"/>
<dbReference type="UniPathway" id="UPA00331">
    <property type="reaction ID" value="UER00451"/>
</dbReference>
<dbReference type="Proteomes" id="UP000000253">
    <property type="component" value="Chromosome"/>
</dbReference>
<dbReference type="GO" id="GO:0005829">
    <property type="term" value="C:cytosol"/>
    <property type="evidence" value="ECO:0007669"/>
    <property type="project" value="TreeGrafter"/>
</dbReference>
<dbReference type="GO" id="GO:0004014">
    <property type="term" value="F:adenosylmethionine decarboxylase activity"/>
    <property type="evidence" value="ECO:0007669"/>
    <property type="project" value="UniProtKB-UniRule"/>
</dbReference>
<dbReference type="GO" id="GO:0008295">
    <property type="term" value="P:spermidine biosynthetic process"/>
    <property type="evidence" value="ECO:0007669"/>
    <property type="project" value="UniProtKB-UniRule"/>
</dbReference>
<dbReference type="FunFam" id="3.30.360.110:FF:000001">
    <property type="entry name" value="S-adenosylmethionine decarboxylase proenzyme"/>
    <property type="match status" value="1"/>
</dbReference>
<dbReference type="Gene3D" id="3.30.160.750">
    <property type="match status" value="1"/>
</dbReference>
<dbReference type="Gene3D" id="3.30.360.110">
    <property type="entry name" value="S-adenosylmethionine decarboxylase domain"/>
    <property type="match status" value="1"/>
</dbReference>
<dbReference type="HAMAP" id="MF_00464">
    <property type="entry name" value="AdoMetDC_1"/>
    <property type="match status" value="1"/>
</dbReference>
<dbReference type="InterPro" id="IPR042286">
    <property type="entry name" value="AdoMetDC_C"/>
</dbReference>
<dbReference type="InterPro" id="IPR003826">
    <property type="entry name" value="AdoMetDC_fam_prok"/>
</dbReference>
<dbReference type="InterPro" id="IPR042284">
    <property type="entry name" value="AdoMetDC_N"/>
</dbReference>
<dbReference type="InterPro" id="IPR016067">
    <property type="entry name" value="S-AdoMet_deCO2ase_core"/>
</dbReference>
<dbReference type="InterPro" id="IPR017716">
    <property type="entry name" value="S-AdoMet_deCOase_pro-enz"/>
</dbReference>
<dbReference type="NCBIfam" id="TIGR03330">
    <property type="entry name" value="SAM_DCase_Bsu"/>
    <property type="match status" value="1"/>
</dbReference>
<dbReference type="PANTHER" id="PTHR33866">
    <property type="entry name" value="S-ADENOSYLMETHIONINE DECARBOXYLASE PROENZYME"/>
    <property type="match status" value="1"/>
</dbReference>
<dbReference type="PANTHER" id="PTHR33866:SF2">
    <property type="entry name" value="S-ADENOSYLMETHIONINE DECARBOXYLASE PROENZYME"/>
    <property type="match status" value="1"/>
</dbReference>
<dbReference type="Pfam" id="PF02675">
    <property type="entry name" value="AdoMet_dc"/>
    <property type="match status" value="1"/>
</dbReference>
<dbReference type="SUPFAM" id="SSF56276">
    <property type="entry name" value="S-adenosylmethionine decarboxylase"/>
    <property type="match status" value="1"/>
</dbReference>
<reference key="1">
    <citation type="submission" date="2007-03" db="EMBL/GenBank/DDBJ databases">
        <title>Complete sequence of chromosome of Methanococcus maripaludis C5.</title>
        <authorList>
            <consortium name="US DOE Joint Genome Institute"/>
            <person name="Copeland A."/>
            <person name="Lucas S."/>
            <person name="Lapidus A."/>
            <person name="Barry K."/>
            <person name="Glavina del Rio T."/>
            <person name="Dalin E."/>
            <person name="Tice H."/>
            <person name="Pitluck S."/>
            <person name="Chertkov O."/>
            <person name="Brettin T."/>
            <person name="Bruce D."/>
            <person name="Han C."/>
            <person name="Detter J.C."/>
            <person name="Schmutz J."/>
            <person name="Larimer F."/>
            <person name="Land M."/>
            <person name="Hauser L."/>
            <person name="Kyrpides N."/>
            <person name="Mikhailova N."/>
            <person name="Sieprawska-Lupa M."/>
            <person name="Whitman W.B."/>
            <person name="Richardson P."/>
        </authorList>
    </citation>
    <scope>NUCLEOTIDE SEQUENCE [LARGE SCALE GENOMIC DNA]</scope>
    <source>
        <strain>C5 / ATCC BAA-1333</strain>
    </source>
</reference>
<evidence type="ECO:0000255" key="1">
    <source>
        <dbReference type="HAMAP-Rule" id="MF_00464"/>
    </source>
</evidence>